<proteinExistence type="inferred from homology"/>
<feature type="chain" id="PRO_1000149576" description="Glycerol-3-phosphate acyltransferase">
    <location>
        <begin position="1"/>
        <end position="198"/>
    </location>
</feature>
<feature type="transmembrane region" description="Helical" evidence="1">
    <location>
        <begin position="5"/>
        <end position="25"/>
    </location>
</feature>
<feature type="transmembrane region" description="Helical" evidence="1">
    <location>
        <begin position="56"/>
        <end position="76"/>
    </location>
</feature>
<feature type="transmembrane region" description="Helical" evidence="1">
    <location>
        <begin position="84"/>
        <end position="104"/>
    </location>
</feature>
<feature type="transmembrane region" description="Helical" evidence="1">
    <location>
        <begin position="114"/>
        <end position="134"/>
    </location>
</feature>
<feature type="transmembrane region" description="Helical" evidence="1">
    <location>
        <begin position="158"/>
        <end position="178"/>
    </location>
</feature>
<dbReference type="EC" id="2.3.1.275" evidence="1"/>
<dbReference type="EMBL" id="CP001175">
    <property type="protein sequence ID" value="ACK39637.1"/>
    <property type="molecule type" value="Genomic_DNA"/>
</dbReference>
<dbReference type="RefSeq" id="WP_003726698.1">
    <property type="nucleotide sequence ID" value="NC_011660.1"/>
</dbReference>
<dbReference type="SMR" id="B8DG47"/>
<dbReference type="KEGG" id="lmh:LMHCC_1291"/>
<dbReference type="HOGENOM" id="CLU_081254_4_0_9"/>
<dbReference type="UniPathway" id="UPA00085"/>
<dbReference type="GO" id="GO:0005886">
    <property type="term" value="C:plasma membrane"/>
    <property type="evidence" value="ECO:0007669"/>
    <property type="project" value="UniProtKB-SubCell"/>
</dbReference>
<dbReference type="GO" id="GO:0043772">
    <property type="term" value="F:acyl-phosphate glycerol-3-phosphate acyltransferase activity"/>
    <property type="evidence" value="ECO:0007669"/>
    <property type="project" value="UniProtKB-UniRule"/>
</dbReference>
<dbReference type="GO" id="GO:0008654">
    <property type="term" value="P:phospholipid biosynthetic process"/>
    <property type="evidence" value="ECO:0007669"/>
    <property type="project" value="UniProtKB-UniRule"/>
</dbReference>
<dbReference type="HAMAP" id="MF_01043">
    <property type="entry name" value="PlsY"/>
    <property type="match status" value="1"/>
</dbReference>
<dbReference type="InterPro" id="IPR003811">
    <property type="entry name" value="G3P_acylTferase_PlsY"/>
</dbReference>
<dbReference type="NCBIfam" id="TIGR00023">
    <property type="entry name" value="glycerol-3-phosphate 1-O-acyltransferase PlsY"/>
    <property type="match status" value="1"/>
</dbReference>
<dbReference type="PANTHER" id="PTHR30309:SF0">
    <property type="entry name" value="GLYCEROL-3-PHOSPHATE ACYLTRANSFERASE-RELATED"/>
    <property type="match status" value="1"/>
</dbReference>
<dbReference type="PANTHER" id="PTHR30309">
    <property type="entry name" value="INNER MEMBRANE PROTEIN YGIH"/>
    <property type="match status" value="1"/>
</dbReference>
<dbReference type="Pfam" id="PF02660">
    <property type="entry name" value="G3P_acyltransf"/>
    <property type="match status" value="1"/>
</dbReference>
<dbReference type="SMART" id="SM01207">
    <property type="entry name" value="G3P_acyltransf"/>
    <property type="match status" value="1"/>
</dbReference>
<name>PLSY_LISMH</name>
<gene>
    <name evidence="1" type="primary">plsY</name>
    <name type="ordered locus">LMHCC_1291</name>
</gene>
<sequence>MTINLILLSLLAYVIGSIPSGLWIGKIFYKKDIRDFGSGNLGATNSFRVLGIKAGSIVTVMDILKGTVATLLPFFFQLNVDHHFWLLTGAFAIIGHSFPLFAGFRGGKAVATSAGVILAYAPLLFVAALVVFLVTLKLSKYVSLSSMIGALAALIISLFMGDWILIILVACIALFVIWRHRANITRIRNGEEPKIKWM</sequence>
<evidence type="ECO:0000255" key="1">
    <source>
        <dbReference type="HAMAP-Rule" id="MF_01043"/>
    </source>
</evidence>
<keyword id="KW-1003">Cell membrane</keyword>
<keyword id="KW-0444">Lipid biosynthesis</keyword>
<keyword id="KW-0443">Lipid metabolism</keyword>
<keyword id="KW-0472">Membrane</keyword>
<keyword id="KW-0594">Phospholipid biosynthesis</keyword>
<keyword id="KW-1208">Phospholipid metabolism</keyword>
<keyword id="KW-0808">Transferase</keyword>
<keyword id="KW-0812">Transmembrane</keyword>
<keyword id="KW-1133">Transmembrane helix</keyword>
<protein>
    <recommendedName>
        <fullName evidence="1">Glycerol-3-phosphate acyltransferase</fullName>
    </recommendedName>
    <alternativeName>
        <fullName evidence="1">Acyl-PO4 G3P acyltransferase</fullName>
    </alternativeName>
    <alternativeName>
        <fullName evidence="1">Acyl-phosphate--glycerol-3-phosphate acyltransferase</fullName>
    </alternativeName>
    <alternativeName>
        <fullName evidence="1">G3P acyltransferase</fullName>
        <shortName evidence="1">GPAT</shortName>
        <ecNumber evidence="1">2.3.1.275</ecNumber>
    </alternativeName>
    <alternativeName>
        <fullName evidence="1">Lysophosphatidic acid synthase</fullName>
        <shortName evidence="1">LPA synthase</shortName>
    </alternativeName>
</protein>
<organism>
    <name type="scientific">Listeria monocytogenes serotype 4a (strain HCC23)</name>
    <dbReference type="NCBI Taxonomy" id="552536"/>
    <lineage>
        <taxon>Bacteria</taxon>
        <taxon>Bacillati</taxon>
        <taxon>Bacillota</taxon>
        <taxon>Bacilli</taxon>
        <taxon>Bacillales</taxon>
        <taxon>Listeriaceae</taxon>
        <taxon>Listeria</taxon>
    </lineage>
</organism>
<accession>B8DG47</accession>
<comment type="function">
    <text evidence="1">Catalyzes the transfer of an acyl group from acyl-phosphate (acyl-PO(4)) to glycerol-3-phosphate (G3P) to form lysophosphatidic acid (LPA). This enzyme utilizes acyl-phosphate as fatty acyl donor, but not acyl-CoA or acyl-ACP.</text>
</comment>
<comment type="catalytic activity">
    <reaction evidence="1">
        <text>an acyl phosphate + sn-glycerol 3-phosphate = a 1-acyl-sn-glycero-3-phosphate + phosphate</text>
        <dbReference type="Rhea" id="RHEA:34075"/>
        <dbReference type="ChEBI" id="CHEBI:43474"/>
        <dbReference type="ChEBI" id="CHEBI:57597"/>
        <dbReference type="ChEBI" id="CHEBI:57970"/>
        <dbReference type="ChEBI" id="CHEBI:59918"/>
        <dbReference type="EC" id="2.3.1.275"/>
    </reaction>
</comment>
<comment type="pathway">
    <text evidence="1">Lipid metabolism; phospholipid metabolism.</text>
</comment>
<comment type="subunit">
    <text evidence="1">Probably interacts with PlsX.</text>
</comment>
<comment type="subcellular location">
    <subcellularLocation>
        <location evidence="1">Cell membrane</location>
        <topology evidence="1">Multi-pass membrane protein</topology>
    </subcellularLocation>
</comment>
<comment type="similarity">
    <text evidence="1">Belongs to the PlsY family.</text>
</comment>
<reference key="1">
    <citation type="journal article" date="2011" name="J. Bacteriol.">
        <title>Genome sequence of lineage III Listeria monocytogenes strain HCC23.</title>
        <authorList>
            <person name="Steele C.L."/>
            <person name="Donaldson J.R."/>
            <person name="Paul D."/>
            <person name="Banes M.M."/>
            <person name="Arick T."/>
            <person name="Bridges S.M."/>
            <person name="Lawrence M.L."/>
        </authorList>
    </citation>
    <scope>NUCLEOTIDE SEQUENCE [LARGE SCALE GENOMIC DNA]</scope>
    <source>
        <strain>HCC23</strain>
    </source>
</reference>